<name>RL15_RHIME</name>
<reference key="1">
    <citation type="journal article" date="2001" name="Proc. Natl. Acad. Sci. U.S.A.">
        <title>Analysis of the chromosome sequence of the legume symbiont Sinorhizobium meliloti strain 1021.</title>
        <authorList>
            <person name="Capela D."/>
            <person name="Barloy-Hubler F."/>
            <person name="Gouzy J."/>
            <person name="Bothe G."/>
            <person name="Ampe F."/>
            <person name="Batut J."/>
            <person name="Boistard P."/>
            <person name="Becker A."/>
            <person name="Boutry M."/>
            <person name="Cadieu E."/>
            <person name="Dreano S."/>
            <person name="Gloux S."/>
            <person name="Godrie T."/>
            <person name="Goffeau A."/>
            <person name="Kahn D."/>
            <person name="Kiss E."/>
            <person name="Lelaure V."/>
            <person name="Masuy D."/>
            <person name="Pohl T."/>
            <person name="Portetelle D."/>
            <person name="Puehler A."/>
            <person name="Purnelle B."/>
            <person name="Ramsperger U."/>
            <person name="Renard C."/>
            <person name="Thebault P."/>
            <person name="Vandenbol M."/>
            <person name="Weidner S."/>
            <person name="Galibert F."/>
        </authorList>
    </citation>
    <scope>NUCLEOTIDE SEQUENCE [LARGE SCALE GENOMIC DNA]</scope>
    <source>
        <strain>1021</strain>
    </source>
</reference>
<reference key="2">
    <citation type="journal article" date="2001" name="Science">
        <title>The composite genome of the legume symbiont Sinorhizobium meliloti.</title>
        <authorList>
            <person name="Galibert F."/>
            <person name="Finan T.M."/>
            <person name="Long S.R."/>
            <person name="Puehler A."/>
            <person name="Abola P."/>
            <person name="Ampe F."/>
            <person name="Barloy-Hubler F."/>
            <person name="Barnett M.J."/>
            <person name="Becker A."/>
            <person name="Boistard P."/>
            <person name="Bothe G."/>
            <person name="Boutry M."/>
            <person name="Bowser L."/>
            <person name="Buhrmester J."/>
            <person name="Cadieu E."/>
            <person name="Capela D."/>
            <person name="Chain P."/>
            <person name="Cowie A."/>
            <person name="Davis R.W."/>
            <person name="Dreano S."/>
            <person name="Federspiel N.A."/>
            <person name="Fisher R.F."/>
            <person name="Gloux S."/>
            <person name="Godrie T."/>
            <person name="Goffeau A."/>
            <person name="Golding B."/>
            <person name="Gouzy J."/>
            <person name="Gurjal M."/>
            <person name="Hernandez-Lucas I."/>
            <person name="Hong A."/>
            <person name="Huizar L."/>
            <person name="Hyman R.W."/>
            <person name="Jones T."/>
            <person name="Kahn D."/>
            <person name="Kahn M.L."/>
            <person name="Kalman S."/>
            <person name="Keating D.H."/>
            <person name="Kiss E."/>
            <person name="Komp C."/>
            <person name="Lelaure V."/>
            <person name="Masuy D."/>
            <person name="Palm C."/>
            <person name="Peck M.C."/>
            <person name="Pohl T.M."/>
            <person name="Portetelle D."/>
            <person name="Purnelle B."/>
            <person name="Ramsperger U."/>
            <person name="Surzycki R."/>
            <person name="Thebault P."/>
            <person name="Vandenbol M."/>
            <person name="Vorhoelter F.J."/>
            <person name="Weidner S."/>
            <person name="Wells D.H."/>
            <person name="Wong K."/>
            <person name="Yeh K.-C."/>
            <person name="Batut J."/>
        </authorList>
    </citation>
    <scope>NUCLEOTIDE SEQUENCE [LARGE SCALE GENOMIC DNA]</scope>
    <source>
        <strain>1021</strain>
    </source>
</reference>
<organism>
    <name type="scientific">Rhizobium meliloti (strain 1021)</name>
    <name type="common">Ensifer meliloti</name>
    <name type="synonym">Sinorhizobium meliloti</name>
    <dbReference type="NCBI Taxonomy" id="266834"/>
    <lineage>
        <taxon>Bacteria</taxon>
        <taxon>Pseudomonadati</taxon>
        <taxon>Pseudomonadota</taxon>
        <taxon>Alphaproteobacteria</taxon>
        <taxon>Hyphomicrobiales</taxon>
        <taxon>Rhizobiaceae</taxon>
        <taxon>Sinorhizobium/Ensifer group</taxon>
        <taxon>Sinorhizobium</taxon>
    </lineage>
</organism>
<protein>
    <recommendedName>
        <fullName evidence="1">Large ribosomal subunit protein uL15</fullName>
    </recommendedName>
    <alternativeName>
        <fullName evidence="3">50S ribosomal protein L15</fullName>
    </alternativeName>
</protein>
<dbReference type="EMBL" id="AL591688">
    <property type="protein sequence ID" value="CAC45954.1"/>
    <property type="molecule type" value="Genomic_DNA"/>
</dbReference>
<dbReference type="RefSeq" id="NP_385481.1">
    <property type="nucleotide sequence ID" value="NC_003047.1"/>
</dbReference>
<dbReference type="RefSeq" id="WP_010969197.1">
    <property type="nucleotide sequence ID" value="NC_003047.1"/>
</dbReference>
<dbReference type="SMR" id="Q92QF1"/>
<dbReference type="EnsemblBacteria" id="CAC45954">
    <property type="protein sequence ID" value="CAC45954"/>
    <property type="gene ID" value="SMc01290"/>
</dbReference>
<dbReference type="KEGG" id="sme:SMc01290"/>
<dbReference type="PATRIC" id="fig|266834.11.peg.2791"/>
<dbReference type="eggNOG" id="COG0200">
    <property type="taxonomic scope" value="Bacteria"/>
</dbReference>
<dbReference type="HOGENOM" id="CLU_055188_4_0_5"/>
<dbReference type="OrthoDB" id="9810293at2"/>
<dbReference type="Proteomes" id="UP000001976">
    <property type="component" value="Chromosome"/>
</dbReference>
<dbReference type="GO" id="GO:0022625">
    <property type="term" value="C:cytosolic large ribosomal subunit"/>
    <property type="evidence" value="ECO:0007669"/>
    <property type="project" value="TreeGrafter"/>
</dbReference>
<dbReference type="GO" id="GO:0019843">
    <property type="term" value="F:rRNA binding"/>
    <property type="evidence" value="ECO:0007669"/>
    <property type="project" value="UniProtKB-UniRule"/>
</dbReference>
<dbReference type="GO" id="GO:0003735">
    <property type="term" value="F:structural constituent of ribosome"/>
    <property type="evidence" value="ECO:0007669"/>
    <property type="project" value="InterPro"/>
</dbReference>
<dbReference type="GO" id="GO:0006412">
    <property type="term" value="P:translation"/>
    <property type="evidence" value="ECO:0007669"/>
    <property type="project" value="UniProtKB-UniRule"/>
</dbReference>
<dbReference type="Gene3D" id="3.100.10.10">
    <property type="match status" value="1"/>
</dbReference>
<dbReference type="HAMAP" id="MF_01341">
    <property type="entry name" value="Ribosomal_uL15"/>
    <property type="match status" value="1"/>
</dbReference>
<dbReference type="InterPro" id="IPR030878">
    <property type="entry name" value="Ribosomal_uL15"/>
</dbReference>
<dbReference type="InterPro" id="IPR021131">
    <property type="entry name" value="Ribosomal_uL15/eL18"/>
</dbReference>
<dbReference type="InterPro" id="IPR036227">
    <property type="entry name" value="Ribosomal_uL15/eL18_sf"/>
</dbReference>
<dbReference type="InterPro" id="IPR005749">
    <property type="entry name" value="Ribosomal_uL15_bac-type"/>
</dbReference>
<dbReference type="InterPro" id="IPR001196">
    <property type="entry name" value="Ribosomal_uL15_CS"/>
</dbReference>
<dbReference type="NCBIfam" id="TIGR01071">
    <property type="entry name" value="rplO_bact"/>
    <property type="match status" value="1"/>
</dbReference>
<dbReference type="PANTHER" id="PTHR12934">
    <property type="entry name" value="50S RIBOSOMAL PROTEIN L15"/>
    <property type="match status" value="1"/>
</dbReference>
<dbReference type="PANTHER" id="PTHR12934:SF11">
    <property type="entry name" value="LARGE RIBOSOMAL SUBUNIT PROTEIN UL15M"/>
    <property type="match status" value="1"/>
</dbReference>
<dbReference type="Pfam" id="PF00828">
    <property type="entry name" value="Ribosomal_L27A"/>
    <property type="match status" value="1"/>
</dbReference>
<dbReference type="SUPFAM" id="SSF52080">
    <property type="entry name" value="Ribosomal proteins L15p and L18e"/>
    <property type="match status" value="1"/>
</dbReference>
<dbReference type="PROSITE" id="PS00475">
    <property type="entry name" value="RIBOSOMAL_L15"/>
    <property type="match status" value="1"/>
</dbReference>
<sequence length="156" mass="16213">MKLNEIKDNEGATKNRKRLGRGIGSGSGKTAGRGVKGQKARSGVAINGFEGGQMPIYRRLPKRGFNNIFASEFVVVSLGRIQAAVDAKKLDASKTVDAAALKAAGVIRRVKDGVRVLADGELKAKVSLEVAGASKPAIEKIEKAGGSINLLSAAAE</sequence>
<keyword id="KW-1185">Reference proteome</keyword>
<keyword id="KW-0687">Ribonucleoprotein</keyword>
<keyword id="KW-0689">Ribosomal protein</keyword>
<keyword id="KW-0694">RNA-binding</keyword>
<keyword id="KW-0699">rRNA-binding</keyword>
<accession>Q92QF1</accession>
<feature type="chain" id="PRO_0000104792" description="Large ribosomal subunit protein uL15">
    <location>
        <begin position="1"/>
        <end position="156"/>
    </location>
</feature>
<feature type="region of interest" description="Disordered" evidence="2">
    <location>
        <begin position="1"/>
        <end position="39"/>
    </location>
</feature>
<feature type="compositionally biased region" description="Basic and acidic residues" evidence="2">
    <location>
        <begin position="1"/>
        <end position="13"/>
    </location>
</feature>
<feature type="compositionally biased region" description="Gly residues" evidence="2">
    <location>
        <begin position="21"/>
        <end position="35"/>
    </location>
</feature>
<proteinExistence type="inferred from homology"/>
<evidence type="ECO:0000255" key="1">
    <source>
        <dbReference type="HAMAP-Rule" id="MF_01341"/>
    </source>
</evidence>
<evidence type="ECO:0000256" key="2">
    <source>
        <dbReference type="SAM" id="MobiDB-lite"/>
    </source>
</evidence>
<evidence type="ECO:0000305" key="3"/>
<gene>
    <name evidence="1" type="primary">rplO</name>
    <name type="ordered locus">R01375</name>
    <name type="ORF">SMc01290</name>
</gene>
<comment type="function">
    <text evidence="1">Binds to the 23S rRNA.</text>
</comment>
<comment type="subunit">
    <text evidence="1">Part of the 50S ribosomal subunit.</text>
</comment>
<comment type="similarity">
    <text evidence="1">Belongs to the universal ribosomal protein uL15 family.</text>
</comment>